<sequence>MAGAARDRAFLDHFGGAGADRPCHVEGALMNDMSRQATRLDAIGGRYDPWLLGAAVTLASLGVVMVASSSIELEASPFYYLTRHLLFLGGGIALAFWAMRTELKTIEQHNQMLLLACFVLLVVVFVPGLGSTVNGAKRWINLGVSRFQVVESVKVFYIIWLASYLVRFRDEVNATWQAMLKPVFVVGLLVGLLLLQPDFGSSMLLLSVTACMLVLGGAPIGRIILPILLLLPALVALVIFEPYRMRRVTSFMDPWVDQLGSGYQLSNALMAIGRGQWTGVGLGASVQKLNYLPESHTDFIFSVIAEELGFVGVCGVIGLYALLVGRAFWLGMRCVEMKRHFSGYIAFGIGLWIAMQSFVSIGVNLGILPTKGLTLPLISSGGSSVLMTCLAMGVLLRVSYEADRAERLRSKLSPQGAAISPGEPAEPVVDAVPPAYAPARKPQRDTAAAPAPAAAPVAAHVAPASAILRGTSRMQPRVEPTFGRIA</sequence>
<name>FTSW_XANOR</name>
<dbReference type="EC" id="2.4.99.28" evidence="2"/>
<dbReference type="EMBL" id="AE013598">
    <property type="protein sequence ID" value="AAW77081.1"/>
    <property type="molecule type" value="Genomic_DNA"/>
</dbReference>
<dbReference type="SMR" id="Q5GW40"/>
<dbReference type="STRING" id="291331.XOO3827"/>
<dbReference type="KEGG" id="xoo:XOO3827"/>
<dbReference type="HOGENOM" id="CLU_029243_1_1_6"/>
<dbReference type="UniPathway" id="UPA00219"/>
<dbReference type="Proteomes" id="UP000006735">
    <property type="component" value="Chromosome"/>
</dbReference>
<dbReference type="GO" id="GO:0032153">
    <property type="term" value="C:cell division site"/>
    <property type="evidence" value="ECO:0007669"/>
    <property type="project" value="UniProtKB-UniRule"/>
</dbReference>
<dbReference type="GO" id="GO:0005886">
    <property type="term" value="C:plasma membrane"/>
    <property type="evidence" value="ECO:0007669"/>
    <property type="project" value="UniProtKB-SubCell"/>
</dbReference>
<dbReference type="GO" id="GO:0015648">
    <property type="term" value="F:lipid-linked peptidoglycan transporter activity"/>
    <property type="evidence" value="ECO:0007669"/>
    <property type="project" value="TreeGrafter"/>
</dbReference>
<dbReference type="GO" id="GO:0008955">
    <property type="term" value="F:peptidoglycan glycosyltransferase activity"/>
    <property type="evidence" value="ECO:0007669"/>
    <property type="project" value="UniProtKB-UniRule"/>
</dbReference>
<dbReference type="GO" id="GO:0071555">
    <property type="term" value="P:cell wall organization"/>
    <property type="evidence" value="ECO:0007669"/>
    <property type="project" value="UniProtKB-KW"/>
</dbReference>
<dbReference type="GO" id="GO:0043093">
    <property type="term" value="P:FtsZ-dependent cytokinesis"/>
    <property type="evidence" value="ECO:0007669"/>
    <property type="project" value="UniProtKB-UniRule"/>
</dbReference>
<dbReference type="GO" id="GO:0009252">
    <property type="term" value="P:peptidoglycan biosynthetic process"/>
    <property type="evidence" value="ECO:0007669"/>
    <property type="project" value="UniProtKB-UniRule"/>
</dbReference>
<dbReference type="GO" id="GO:0008360">
    <property type="term" value="P:regulation of cell shape"/>
    <property type="evidence" value="ECO:0007669"/>
    <property type="project" value="UniProtKB-KW"/>
</dbReference>
<dbReference type="HAMAP" id="MF_00913">
    <property type="entry name" value="PGT_FtsW_proteobact"/>
    <property type="match status" value="1"/>
</dbReference>
<dbReference type="InterPro" id="IPR013437">
    <property type="entry name" value="FtsW"/>
</dbReference>
<dbReference type="InterPro" id="IPR001182">
    <property type="entry name" value="FtsW/RodA"/>
</dbReference>
<dbReference type="NCBIfam" id="TIGR02614">
    <property type="entry name" value="ftsW"/>
    <property type="match status" value="1"/>
</dbReference>
<dbReference type="PANTHER" id="PTHR30474">
    <property type="entry name" value="CELL CYCLE PROTEIN"/>
    <property type="match status" value="1"/>
</dbReference>
<dbReference type="PANTHER" id="PTHR30474:SF2">
    <property type="entry name" value="PEPTIDOGLYCAN GLYCOSYLTRANSFERASE FTSW-RELATED"/>
    <property type="match status" value="1"/>
</dbReference>
<dbReference type="Pfam" id="PF01098">
    <property type="entry name" value="FTSW_RODA_SPOVE"/>
    <property type="match status" value="1"/>
</dbReference>
<accession>Q5GW40</accession>
<gene>
    <name evidence="2" type="primary">ftsW</name>
    <name type="ordered locus">XOO3827</name>
</gene>
<organism>
    <name type="scientific">Xanthomonas oryzae pv. oryzae (strain KACC10331 / KXO85)</name>
    <dbReference type="NCBI Taxonomy" id="291331"/>
    <lineage>
        <taxon>Bacteria</taxon>
        <taxon>Pseudomonadati</taxon>
        <taxon>Pseudomonadota</taxon>
        <taxon>Gammaproteobacteria</taxon>
        <taxon>Lysobacterales</taxon>
        <taxon>Lysobacteraceae</taxon>
        <taxon>Xanthomonas</taxon>
    </lineage>
</organism>
<proteinExistence type="inferred from homology"/>
<reference key="1">
    <citation type="journal article" date="2005" name="Nucleic Acids Res.">
        <title>The genome sequence of Xanthomonas oryzae pathovar oryzae KACC10331, the bacterial blight pathogen of rice.</title>
        <authorList>
            <person name="Lee B.-M."/>
            <person name="Park Y.-J."/>
            <person name="Park D.-S."/>
            <person name="Kang H.-W."/>
            <person name="Kim J.-G."/>
            <person name="Song E.-S."/>
            <person name="Park I.-C."/>
            <person name="Yoon U.-H."/>
            <person name="Hahn J.-H."/>
            <person name="Koo B.-S."/>
            <person name="Lee G.-B."/>
            <person name="Kim H."/>
            <person name="Park H.-S."/>
            <person name="Yoon K.-O."/>
            <person name="Kim J.-H."/>
            <person name="Jung C.-H."/>
            <person name="Koh N.-H."/>
            <person name="Seo J.-S."/>
            <person name="Go S.-J."/>
        </authorList>
    </citation>
    <scope>NUCLEOTIDE SEQUENCE [LARGE SCALE GENOMIC DNA]</scope>
    <source>
        <strain>KACC10331 / KXO85</strain>
    </source>
</reference>
<comment type="function">
    <text evidence="2">Peptidoglycan polymerase that is essential for cell division.</text>
</comment>
<comment type="catalytic activity">
    <reaction evidence="2">
        <text>[GlcNAc-(1-&gt;4)-Mur2Ac(oyl-L-Ala-gamma-D-Glu-L-Lys-D-Ala-D-Ala)](n)-di-trans,octa-cis-undecaprenyl diphosphate + beta-D-GlcNAc-(1-&gt;4)-Mur2Ac(oyl-L-Ala-gamma-D-Glu-L-Lys-D-Ala-D-Ala)-di-trans,octa-cis-undecaprenyl diphosphate = [GlcNAc-(1-&gt;4)-Mur2Ac(oyl-L-Ala-gamma-D-Glu-L-Lys-D-Ala-D-Ala)](n+1)-di-trans,octa-cis-undecaprenyl diphosphate + di-trans,octa-cis-undecaprenyl diphosphate + H(+)</text>
        <dbReference type="Rhea" id="RHEA:23708"/>
        <dbReference type="Rhea" id="RHEA-COMP:9602"/>
        <dbReference type="Rhea" id="RHEA-COMP:9603"/>
        <dbReference type="ChEBI" id="CHEBI:15378"/>
        <dbReference type="ChEBI" id="CHEBI:58405"/>
        <dbReference type="ChEBI" id="CHEBI:60033"/>
        <dbReference type="ChEBI" id="CHEBI:78435"/>
        <dbReference type="EC" id="2.4.99.28"/>
    </reaction>
</comment>
<comment type="pathway">
    <text evidence="2">Cell wall biogenesis; peptidoglycan biosynthesis.</text>
</comment>
<comment type="subcellular location">
    <subcellularLocation>
        <location evidence="2">Cell inner membrane</location>
        <topology evidence="2">Multi-pass membrane protein</topology>
    </subcellularLocation>
    <text evidence="2">Localizes to the division septum.</text>
</comment>
<comment type="similarity">
    <text evidence="2">Belongs to the SEDS family. FtsW subfamily.</text>
</comment>
<feature type="chain" id="PRO_0000415223" description="Probable peptidoglycan glycosyltransferase FtsW">
    <location>
        <begin position="1"/>
        <end position="486"/>
    </location>
</feature>
<feature type="topological domain" description="Cytoplasmic" evidence="1">
    <location>
        <begin position="1"/>
        <end position="50"/>
    </location>
</feature>
<feature type="transmembrane region" description="Helical" evidence="2">
    <location>
        <begin position="51"/>
        <end position="71"/>
    </location>
</feature>
<feature type="topological domain" description="Periplasmic" evidence="1">
    <location>
        <begin position="72"/>
        <end position="77"/>
    </location>
</feature>
<feature type="transmembrane region" description="Helical" evidence="2">
    <location>
        <begin position="78"/>
        <end position="98"/>
    </location>
</feature>
<feature type="topological domain" description="Cytoplasmic" evidence="1">
    <location>
        <begin position="99"/>
        <end position="112"/>
    </location>
</feature>
<feature type="transmembrane region" description="Helical" evidence="2">
    <location>
        <begin position="113"/>
        <end position="133"/>
    </location>
</feature>
<feature type="topological domain" description="Periplasmic" evidence="1">
    <location>
        <begin position="134"/>
        <end position="141"/>
    </location>
</feature>
<feature type="transmembrane region" description="Helical" evidence="2">
    <location>
        <begin position="142"/>
        <end position="162"/>
    </location>
</feature>
<feature type="topological domain" description="Cytoplasmic" evidence="1">
    <location>
        <begin position="163"/>
        <end position="174"/>
    </location>
</feature>
<feature type="transmembrane region" description="Helical" evidence="2">
    <location>
        <begin position="175"/>
        <end position="195"/>
    </location>
</feature>
<feature type="topological domain" description="Periplasmic" evidence="1">
    <location>
        <begin position="196"/>
        <end position="199"/>
    </location>
</feature>
<feature type="transmembrane region" description="Helical" evidence="2">
    <location>
        <begin position="200"/>
        <end position="220"/>
    </location>
</feature>
<feature type="topological domain" description="Cytoplasmic" evidence="1">
    <location>
        <begin position="221"/>
        <end position="222"/>
    </location>
</feature>
<feature type="transmembrane region" description="Helical" evidence="2">
    <location>
        <begin position="223"/>
        <end position="243"/>
    </location>
</feature>
<feature type="topological domain" description="Periplasmic" evidence="1">
    <location>
        <begin position="244"/>
        <end position="298"/>
    </location>
</feature>
<feature type="transmembrane region" description="Helical" evidence="2">
    <location>
        <begin position="299"/>
        <end position="319"/>
    </location>
</feature>
<feature type="topological domain" description="Cytoplasmic" evidence="1">
    <location>
        <begin position="320"/>
        <end position="342"/>
    </location>
</feature>
<feature type="transmembrane region" description="Helical" evidence="2">
    <location>
        <begin position="343"/>
        <end position="363"/>
    </location>
</feature>
<feature type="topological domain" description="Periplasmic" evidence="1">
    <location>
        <begin position="364"/>
        <end position="374"/>
    </location>
</feature>
<feature type="transmembrane region" description="Helical" evidence="2">
    <location>
        <begin position="375"/>
        <end position="395"/>
    </location>
</feature>
<feature type="topological domain" description="Cytoplasmic" evidence="1">
    <location>
        <begin position="396"/>
        <end position="486"/>
    </location>
</feature>
<protein>
    <recommendedName>
        <fullName evidence="2">Probable peptidoglycan glycosyltransferase FtsW</fullName>
        <shortName evidence="2">PGT</shortName>
        <ecNumber evidence="2">2.4.99.28</ecNumber>
    </recommendedName>
    <alternativeName>
        <fullName evidence="2">Cell division protein FtsW</fullName>
    </alternativeName>
    <alternativeName>
        <fullName evidence="2">Cell wall polymerase</fullName>
    </alternativeName>
    <alternativeName>
        <fullName evidence="2">Peptidoglycan polymerase</fullName>
        <shortName evidence="2">PG polymerase</shortName>
    </alternativeName>
</protein>
<keyword id="KW-0131">Cell cycle</keyword>
<keyword id="KW-0132">Cell division</keyword>
<keyword id="KW-0997">Cell inner membrane</keyword>
<keyword id="KW-1003">Cell membrane</keyword>
<keyword id="KW-0133">Cell shape</keyword>
<keyword id="KW-0961">Cell wall biogenesis/degradation</keyword>
<keyword id="KW-0328">Glycosyltransferase</keyword>
<keyword id="KW-0472">Membrane</keyword>
<keyword id="KW-0573">Peptidoglycan synthesis</keyword>
<keyword id="KW-1185">Reference proteome</keyword>
<keyword id="KW-0808">Transferase</keyword>
<keyword id="KW-0812">Transmembrane</keyword>
<keyword id="KW-1133">Transmembrane helix</keyword>
<evidence type="ECO:0000255" key="1"/>
<evidence type="ECO:0000255" key="2">
    <source>
        <dbReference type="HAMAP-Rule" id="MF_00913"/>
    </source>
</evidence>